<keyword id="KW-0002">3D-structure</keyword>
<keyword id="KW-0223">Dioxygenase</keyword>
<keyword id="KW-0560">Oxidoreductase</keyword>
<keyword id="KW-0614">Plasmid</keyword>
<name>HOD_PAENT</name>
<reference key="1">
    <citation type="journal article" date="2000" name="J. Basic Microbiol.">
        <title>Molecular cloning, sequencing, expression, and site-directed mutagenesis of the 1H-3-hydroxy-4-oxoquinaldine 2,4-dioxygenase gene from Arthrobacter spec. Ru61a.</title>
        <authorList>
            <person name="Betz A."/>
            <person name="Facey S.J."/>
            <person name="Hauer B."/>
            <person name="Tshisuaka B."/>
            <person name="Lingens F."/>
        </authorList>
    </citation>
    <scope>NUCLEOTIDE SEQUENCE [GENOMIC DNA]</scope>
    <scope>CATALYTIC ACTIVITY</scope>
    <scope>FUNCTION</scope>
    <scope>MUTAGENESIS OF SER-101 AND ASP-233</scope>
    <source>
        <strain>Rue61a</strain>
    </source>
</reference>
<reference key="2">
    <citation type="journal article" date="2007" name="J. Bacteriol.">
        <title>Complete nucleotide sequence of the 113-kilobase linear catabolic plasmid pAL1 of Arthrobacter nitroguajacolicus Ru61a and transcriptional analysis of genes involved in quinaldine degradation.</title>
        <authorList>
            <person name="Parschat K."/>
            <person name="Overhage J."/>
            <person name="Strittmatter A.W."/>
            <person name="Henne A."/>
            <person name="Gottschalk G."/>
            <person name="Fetzner S."/>
        </authorList>
    </citation>
    <scope>NUCLEOTIDE SEQUENCE [GENOMIC DNA]</scope>
    <scope>INDUCTION</scope>
    <source>
        <strain>Rue61a</strain>
    </source>
</reference>
<reference key="3">
    <citation type="journal article" date="2004" name="Biochemistry">
        <title>Dioxygenases without requirement for cofactors and their chemical model reaction: compulsory order ternary complex mechanism of 1H-3-hydroxy-4-oxoquinaldine 2,4-dioxygenase involving general base catalysis by histidine 251 and single-electron oxidation of the substrate dianion.</title>
        <authorList>
            <person name="Frerichs-Deeken U."/>
            <person name="Ranguelova K."/>
            <person name="Kappl R."/>
            <person name="Huttermann J."/>
            <person name="Fetzner S."/>
        </authorList>
    </citation>
    <scope>CATALYTIC ACTIVITY</scope>
    <scope>MUTAGENESIS OF SER-101; HIS-102 AND TYR-196</scope>
    <scope>BIOPHYSICOCHEMICAL PROPERTIES</scope>
    <source>
        <strain>Rue61a</strain>
    </source>
</reference>
<reference key="4">
    <citation type="journal article" date="2005" name="Curr. Microbiol.">
        <title>Dioxygenases without requirement for cofactors: identification of amino acid residues involved in substrate binding and catalysis, and testing for rate-limiting steps in the reaction of 1H-3-hydroxy-4-oxoquinaldine 2,4-dioxygenase.</title>
        <authorList>
            <person name="Frerichs-Deeken U."/>
            <person name="Fetzner S."/>
        </authorList>
    </citation>
    <scope>CATALYTIC ACTIVITY</scope>
    <scope>MUTAGENESIS OF HIS-251</scope>
    <scope>BIOPHYSICOCHEMICAL PROPERTIES</scope>
    <scope>ACTIVE SITE</scope>
    <scope>IDENTIFICATION BY MASS SPECTROMETRY</scope>
    <source>
        <strain>Rue61a</strain>
    </source>
</reference>
<reference key="5">
    <citation type="journal article" date="2010" name="Proc. Natl. Acad. Sci. U.S.A.">
        <title>Structural basis for cofactor-independent dioxygenation of N-heteroaromatic compounds at the alpha/beta-hydrolase fold.</title>
        <authorList>
            <person name="Steiner R.A."/>
            <person name="Janssen H.J."/>
            <person name="Roversi P."/>
            <person name="Oakley A.J."/>
            <person name="Fetzner S."/>
        </authorList>
    </citation>
    <scope>X-RAY CRYSTALLOGRAPHY (2.00 ANGSTROMS) IN COMPLEXES WITH 2-(ACETYLAMINO)BENZOIC ACID AND 3-HYDROXY-2-METHYLQUINOLIN-4(1H)-ONE</scope>
    <scope>CATALYTIC ACTIVITY</scope>
    <scope>BIOPHYSICOCHEMICAL PROPERTIES</scope>
    <scope>LACK OF COFACTOR</scope>
    <scope>MUTAGENESIS OF HIS-251</scope>
</reference>
<geneLocation type="plasmid">
    <name>pAL1</name>
</geneLocation>
<feature type="chain" id="PRO_0000418915" description="1H-3-hydroxy-4-oxoquinaldine 2,4-dioxygenase">
    <location>
        <begin position="1"/>
        <end position="276"/>
    </location>
</feature>
<feature type="domain" description="AB hydrolase-1" evidence="2">
    <location>
        <begin position="28"/>
        <end position="150"/>
    </location>
</feature>
<feature type="active site" description="Proton donor/acceptor" evidence="5">
    <location>
        <position position="251"/>
    </location>
</feature>
<feature type="binding site">
    <location>
        <begin position="36"/>
        <end position="38"/>
    </location>
    <ligand>
        <name>substrate</name>
    </ligand>
</feature>
<feature type="binding site">
    <location>
        <begin position="100"/>
        <end position="101"/>
    </location>
    <ligand>
        <name>substrate</name>
    </ligand>
</feature>
<feature type="binding site">
    <location>
        <position position="160"/>
    </location>
    <ligand>
        <name>substrate</name>
    </ligand>
</feature>
<feature type="site" description="Increases basicity of active site His" evidence="1">
    <location>
        <position position="126"/>
    </location>
</feature>
<feature type="mutagenesis site" description="Strongly reduced affinity for substrate. Reduced enzyme activity.">
    <original>H</original>
    <variation>A</variation>
    <location>
        <position position="38"/>
    </location>
</feature>
<feature type="mutagenesis site" description="Strongly reduced affinity for substrate. Strongly reduced enzyme activity." evidence="3 4">
    <original>S</original>
    <variation>A</variation>
    <location>
        <position position="101"/>
    </location>
</feature>
<feature type="mutagenesis site" description="Strongly reduced enzyme activity." evidence="4">
    <original>H</original>
    <variation>L</variation>
    <location>
        <position position="102"/>
    </location>
</feature>
<feature type="mutagenesis site" description="Reduces enzyme activity by about half." evidence="4">
    <original>H</original>
    <variation>Q</variation>
    <location>
        <position position="102"/>
    </location>
</feature>
<feature type="mutagenesis site" description="Strongly reduced enzyme activity.">
    <original>D</original>
    <variation>A</variation>
    <location>
        <position position="126"/>
    </location>
</feature>
<feature type="mutagenesis site" description="Strongly reduced affinity for substrate. Strongly reduced enzyme activity." evidence="4">
    <original>Y</original>
    <variation>A</variation>
    <variation>K</variation>
    <variation>R</variation>
    <location>
        <position position="196"/>
    </location>
</feature>
<feature type="mutagenesis site" description="Reduces enzyme activity by about half." evidence="3">
    <original>D</original>
    <variation>A</variation>
    <location>
        <position position="233"/>
    </location>
</feature>
<feature type="mutagenesis site" description="Abolishes enzyme activity." evidence="5 7">
    <original>H</original>
    <variation>A</variation>
    <location>
        <position position="251"/>
    </location>
</feature>
<feature type="helix" evidence="9">
    <location>
        <begin position="3"/>
        <end position="5"/>
    </location>
</feature>
<feature type="strand" evidence="10">
    <location>
        <begin position="6"/>
        <end position="11"/>
    </location>
</feature>
<feature type="strand" evidence="10">
    <location>
        <begin position="14"/>
        <end position="20"/>
    </location>
</feature>
<feature type="strand" evidence="10">
    <location>
        <begin position="25"/>
        <end position="27"/>
    </location>
</feature>
<feature type="strand" evidence="10">
    <location>
        <begin position="29"/>
        <end position="33"/>
    </location>
</feature>
<feature type="helix" evidence="10">
    <location>
        <begin position="40"/>
        <end position="43"/>
    </location>
</feature>
<feature type="helix" evidence="10">
    <location>
        <begin position="44"/>
        <end position="50"/>
    </location>
</feature>
<feature type="turn" evidence="10">
    <location>
        <begin position="51"/>
        <end position="53"/>
    </location>
</feature>
<feature type="strand" evidence="10">
    <location>
        <begin position="56"/>
        <end position="59"/>
    </location>
</feature>
<feature type="strand" evidence="10">
    <location>
        <begin position="65"/>
        <end position="67"/>
    </location>
</feature>
<feature type="helix" evidence="10">
    <location>
        <begin position="76"/>
        <end position="90"/>
    </location>
</feature>
<feature type="strand" evidence="10">
    <location>
        <begin position="94"/>
        <end position="100"/>
    </location>
</feature>
<feature type="helix" evidence="10">
    <location>
        <begin position="101"/>
        <end position="103"/>
    </location>
</feature>
<feature type="helix" evidence="10">
    <location>
        <begin position="104"/>
        <end position="118"/>
    </location>
</feature>
<feature type="strand" evidence="10">
    <location>
        <begin position="122"/>
        <end position="126"/>
    </location>
</feature>
<feature type="helix" evidence="10">
    <location>
        <begin position="134"/>
        <end position="144"/>
    </location>
</feature>
<feature type="turn" evidence="10">
    <location>
        <begin position="146"/>
        <end position="148"/>
    </location>
</feature>
<feature type="helix" evidence="10">
    <location>
        <begin position="149"/>
        <end position="161"/>
    </location>
</feature>
<feature type="helix" evidence="10">
    <location>
        <begin position="167"/>
        <end position="174"/>
    </location>
</feature>
<feature type="turn" evidence="10">
    <location>
        <begin position="175"/>
        <end position="179"/>
    </location>
</feature>
<feature type="helix" evidence="10">
    <location>
        <begin position="182"/>
        <end position="199"/>
    </location>
</feature>
<feature type="helix" evidence="10">
    <location>
        <begin position="202"/>
        <end position="207"/>
    </location>
</feature>
<feature type="strand" evidence="10">
    <location>
        <begin position="215"/>
        <end position="219"/>
    </location>
</feature>
<feature type="helix" evidence="10">
    <location>
        <begin position="225"/>
        <end position="237"/>
    </location>
</feature>
<feature type="strand" evidence="10">
    <location>
        <begin position="241"/>
        <end position="245"/>
    </location>
</feature>
<feature type="strand" evidence="10">
    <location>
        <begin position="249"/>
        <end position="251"/>
    </location>
</feature>
<feature type="helix" evidence="10">
    <location>
        <begin position="253"/>
        <end position="256"/>
    </location>
</feature>
<feature type="helix" evidence="10">
    <location>
        <begin position="258"/>
        <end position="273"/>
    </location>
</feature>
<evidence type="ECO:0000250" key="1">
    <source>
        <dbReference type="UniProtKB" id="B1MFK2"/>
    </source>
</evidence>
<evidence type="ECO:0000255" key="2"/>
<evidence type="ECO:0000269" key="3">
    <source>
    </source>
</evidence>
<evidence type="ECO:0000269" key="4">
    <source>
    </source>
</evidence>
<evidence type="ECO:0000269" key="5">
    <source>
    </source>
</evidence>
<evidence type="ECO:0000269" key="6">
    <source>
    </source>
</evidence>
<evidence type="ECO:0000269" key="7">
    <source>
    </source>
</evidence>
<evidence type="ECO:0000305" key="8"/>
<evidence type="ECO:0007829" key="9">
    <source>
        <dbReference type="PDB" id="2WJ6"/>
    </source>
</evidence>
<evidence type="ECO:0007829" key="10">
    <source>
        <dbReference type="PDB" id="4CFS"/>
    </source>
</evidence>
<dbReference type="EC" id="1.13.11.48"/>
<dbReference type="EMBL" id="Y14778">
    <property type="protein sequence ID" value="CAA75080.1"/>
    <property type="molecule type" value="Genomic_DNA"/>
</dbReference>
<dbReference type="EMBL" id="CP003205">
    <property type="protein sequence ID" value="AFR34517.1"/>
    <property type="molecule type" value="Genomic_DNA"/>
</dbReference>
<dbReference type="PDB" id="2WJ3">
    <property type="method" value="X-ray"/>
    <property type="resolution" value="2.09 A"/>
    <property type="chains" value="A/B/C/D=1-276"/>
</dbReference>
<dbReference type="PDB" id="2WJ4">
    <property type="method" value="X-ray"/>
    <property type="resolution" value="2.10 A"/>
    <property type="chains" value="A/B/C/D=1-276"/>
</dbReference>
<dbReference type="PDB" id="2WJ6">
    <property type="method" value="X-ray"/>
    <property type="resolution" value="2.00 A"/>
    <property type="chains" value="A/B/C/D=1-276"/>
</dbReference>
<dbReference type="PDB" id="2WM2">
    <property type="method" value="X-ray"/>
    <property type="resolution" value="2.70 A"/>
    <property type="chains" value="A/B/C/D=1-276"/>
</dbReference>
<dbReference type="PDB" id="4CFS">
    <property type="method" value="X-ray"/>
    <property type="resolution" value="1.94 A"/>
    <property type="chains" value="A/B/C/D=3-275"/>
</dbReference>
<dbReference type="PDB" id="7OJM">
    <property type="method" value="X-ray"/>
    <property type="resolution" value="2.00 A"/>
    <property type="chains" value="AAA/BBB=1-276"/>
</dbReference>
<dbReference type="PDB" id="7OKZ">
    <property type="method" value="X-ray"/>
    <property type="resolution" value="2.10 A"/>
    <property type="chains" value="AAA/BBB=1-276"/>
</dbReference>
<dbReference type="PDB" id="8A97">
    <property type="method" value="X-ray"/>
    <property type="resolution" value="2.90 A"/>
    <property type="chains" value="AAA/BBB/CCC/DDD=1-276"/>
</dbReference>
<dbReference type="PDB" id="8ORO">
    <property type="method" value="X-ray"/>
    <property type="resolution" value="2.00 A"/>
    <property type="chains" value="AAA/BBB=1-276"/>
</dbReference>
<dbReference type="PDB" id="8OXN">
    <property type="method" value="X-ray"/>
    <property type="resolution" value="2.00 A"/>
    <property type="chains" value="AAA/BBB/CCC/DDD=1-276"/>
</dbReference>
<dbReference type="PDB" id="8OXT">
    <property type="method" value="X-ray"/>
    <property type="resolution" value="2.00 A"/>
    <property type="chains" value="AAA/BBB=1-276"/>
</dbReference>
<dbReference type="PDBsum" id="2WJ3"/>
<dbReference type="PDBsum" id="2WJ4"/>
<dbReference type="PDBsum" id="2WJ6"/>
<dbReference type="PDBsum" id="2WM2"/>
<dbReference type="PDBsum" id="4CFS"/>
<dbReference type="PDBsum" id="7OJM"/>
<dbReference type="PDBsum" id="7OKZ"/>
<dbReference type="PDBsum" id="8A97"/>
<dbReference type="PDBsum" id="8ORO"/>
<dbReference type="PDBsum" id="8OXN"/>
<dbReference type="PDBsum" id="8OXT"/>
<dbReference type="SMR" id="O31266"/>
<dbReference type="ESTHER" id="artsp-hod">
    <property type="family name" value="HOD-cofactorfree-dioxygenase"/>
</dbReference>
<dbReference type="KEGG" id="ag:CAA75080"/>
<dbReference type="KEGG" id="arr:ARUE_113p00080"/>
<dbReference type="PATRIC" id="fig|1118963.3.peg.4723"/>
<dbReference type="HOGENOM" id="CLU_087588_0_0_11"/>
<dbReference type="BRENDA" id="1.13.11.47">
    <property type="organism ID" value="8910"/>
</dbReference>
<dbReference type="BRENDA" id="1.13.11.48">
    <property type="organism ID" value="8910"/>
</dbReference>
<dbReference type="EvolutionaryTrace" id="O31266"/>
<dbReference type="GO" id="GO:0050586">
    <property type="term" value="F:3-hydroxy-2-methylquinolin-4-one 2,4-dioxygenase activity"/>
    <property type="evidence" value="ECO:0007669"/>
    <property type="project" value="UniProtKB-EC"/>
</dbReference>
<dbReference type="GO" id="GO:0016702">
    <property type="term" value="F:oxidoreductase activity, acting on single donors with incorporation of molecular oxygen, incorporation of two atoms of oxygen"/>
    <property type="evidence" value="ECO:0000314"/>
    <property type="project" value="UniProtKB"/>
</dbReference>
<dbReference type="GO" id="GO:0009056">
    <property type="term" value="P:catabolic process"/>
    <property type="evidence" value="ECO:0000314"/>
    <property type="project" value="UniProtKB"/>
</dbReference>
<dbReference type="Gene3D" id="1.10.210.20">
    <property type="match status" value="1"/>
</dbReference>
<dbReference type="Gene3D" id="3.40.50.1820">
    <property type="entry name" value="alpha/beta hydrolase"/>
    <property type="match status" value="1"/>
</dbReference>
<dbReference type="InterPro" id="IPR000073">
    <property type="entry name" value="AB_hydrolase_1"/>
</dbReference>
<dbReference type="InterPro" id="IPR029058">
    <property type="entry name" value="AB_hydrolase_fold"/>
</dbReference>
<dbReference type="InterPro" id="IPR050266">
    <property type="entry name" value="AB_hydrolase_sf"/>
</dbReference>
<dbReference type="PANTHER" id="PTHR43798">
    <property type="entry name" value="MONOACYLGLYCEROL LIPASE"/>
    <property type="match status" value="1"/>
</dbReference>
<dbReference type="Pfam" id="PF00561">
    <property type="entry name" value="Abhydrolase_1"/>
    <property type="match status" value="1"/>
</dbReference>
<dbReference type="SUPFAM" id="SSF53474">
    <property type="entry name" value="alpha/beta-Hydrolases"/>
    <property type="match status" value="1"/>
</dbReference>
<gene>
    <name type="primary">hod</name>
    <name type="synonym">meqE</name>
    <name type="ORF">ARUE_113p00080</name>
    <name type="ORF">pAL1.008</name>
</gene>
<sequence>MTDTYLHETLVFDNKLSYIDNQRDTDGPAILLLPGWCHDHRVYKYLIQELDADFRVIVPNWRGHGLSPCEVPDFGYQEQVKDALEILDQLGVETFLPVSHSHGGWVLVELLEQAGPERAPRGIIMDWLMWAPKPDFAKSLTLLKDPERWREGTHGLFDVWLDGHDEKRVRHHLLEEMADYGYDCWGRSGRVIEDAYGRNGSPMQMMANLTKTRPIRHIFSQPTEPEYEKINSDFAEQHPWFSYAKLGGPTHFPAIDVPDRAAVHIREFATAIRQGQ</sequence>
<organism>
    <name type="scientific">Paenarthrobacter nitroguajacolicus</name>
    <name type="common">Arthrobacter nitroguajacolicus</name>
    <dbReference type="NCBI Taxonomy" id="211146"/>
    <lineage>
        <taxon>Bacteria</taxon>
        <taxon>Bacillati</taxon>
        <taxon>Actinomycetota</taxon>
        <taxon>Actinomycetes</taxon>
        <taxon>Micrococcales</taxon>
        <taxon>Micrococcaceae</taxon>
        <taxon>Paenarthrobacter</taxon>
    </lineage>
</organism>
<comment type="function">
    <text evidence="3">Ring-cleaving dioxygenase involved in quinaldine degradation and utilization.</text>
</comment>
<comment type="catalytic activity">
    <reaction evidence="3 4 5 7">
        <text>3-hydroxy-2-methyl-1H-quinolin-4-one + O2 = N-acetylanthranilate + CO + H(+)</text>
        <dbReference type="Rhea" id="RHEA:21572"/>
        <dbReference type="ChEBI" id="CHEBI:15378"/>
        <dbReference type="ChEBI" id="CHEBI:15379"/>
        <dbReference type="ChEBI" id="CHEBI:16803"/>
        <dbReference type="ChEBI" id="CHEBI:17245"/>
        <dbReference type="ChEBI" id="CHEBI:29216"/>
        <dbReference type="EC" id="1.13.11.48"/>
    </reaction>
</comment>
<comment type="cofactor">
    <text>None. Contrary to most other dioxygenases, this enzyme does not require a cofactor for catalysis.</text>
</comment>
<comment type="biophysicochemical properties">
    <kinetics>
        <KM evidence="4 5 7">1.5 uM for 1H-3-hydroxy-4-oxoquinaldine</KM>
        <KM evidence="4 5 7">180 uM for 1H-3-hydroxy-4-oxoquinoline</KM>
    </kinetics>
    <phDependence>
        <text evidence="4 5 7">Optimum pH is 8-11.</text>
    </phDependence>
</comment>
<comment type="induction">
    <text evidence="6">Expressed from a large linear plasmid that contains the operon for quinaldine degradation.</text>
</comment>
<comment type="similarity">
    <text evidence="8">Belongs to the AB hydrolase superfamily.</text>
</comment>
<protein>
    <recommendedName>
        <fullName>1H-3-hydroxy-4-oxoquinaldine 2,4-dioxygenase</fullName>
        <ecNumber>1.13.11.48</ecNumber>
    </recommendedName>
</protein>
<accession>O31266</accession>
<accession>A4V8M9</accession>
<accession>J7LVS0</accession>
<proteinExistence type="evidence at protein level"/>